<protein>
    <recommendedName>
        <fullName evidence="1">Envelope small membrane protein</fullName>
        <shortName evidence="1">E protein</shortName>
        <shortName evidence="1">sM protein</shortName>
    </recommendedName>
</protein>
<organism>
    <name type="scientific">Avian infectious bronchitis virus (strain Portugal/322/82)</name>
    <name type="common">IBV</name>
    <dbReference type="NCBI Taxonomy" id="31625"/>
    <lineage>
        <taxon>Viruses</taxon>
        <taxon>Riboviria</taxon>
        <taxon>Orthornavirae</taxon>
        <taxon>Pisuviricota</taxon>
        <taxon>Pisoniviricetes</taxon>
        <taxon>Nidovirales</taxon>
        <taxon>Cornidovirineae</taxon>
        <taxon>Coronaviridae</taxon>
        <taxon>Orthocoronavirinae</taxon>
        <taxon>Gammacoronavirus</taxon>
        <taxon>Igacovirus</taxon>
        <taxon>Avian coronavirus</taxon>
    </lineage>
</organism>
<reference key="1">
    <citation type="journal article" date="1991" name="Virology">
        <title>A polycistronic mRNA specified by the coronavirus infectious bronchitis virus.</title>
        <authorList>
            <person name="Liu D.X."/>
            <person name="Cavanagh D."/>
            <person name="Green P."/>
            <person name="Inglis S.C."/>
        </authorList>
    </citation>
    <scope>NUCLEOTIDE SEQUENCE [GENOMIC RNA]</scope>
</reference>
<reference key="2">
    <citation type="journal article" date="1991" name="Virology">
        <title>Association of the infectious bronchitis virus 3c protein with the virion envelope.</title>
        <authorList>
            <person name="Liu D.X."/>
            <person name="Inglis S.C."/>
        </authorList>
    </citation>
    <scope>SUBCELLULAR LOCATION</scope>
</reference>
<comment type="function">
    <text evidence="1">Plays a central role in virus morphogenesis and assembly. Acts as a viroporin and self-assembles in host membranes forming pentameric protein-lipid pores that allow ion transport. Also plays a role in the induction of apoptosis.</text>
</comment>
<comment type="subunit">
    <text evidence="1">Homooligomer. Interacts with the M membrane protein in the budding compartment of the host cell, which is located between endoplasmic reticulum and the Golgi complex. The cytoplasmic tails of both proteins are important for this function. Interacts with Nucleoprotein.</text>
</comment>
<comment type="subcellular location">
    <subcellularLocation>
        <location evidence="1">Host Golgi apparatus membrane</location>
        <topology evidence="1">Single-pass type III membrane protein</topology>
    </subcellularLocation>
    <text evidence="1">The cytoplasmic tail functions as a Golgi complex-targeting signal.</text>
</comment>
<comment type="similarity">
    <text evidence="1">Belongs to the gammacoronaviruses E protein family.</text>
</comment>
<accession>P30246</accession>
<gene>
    <name evidence="1" type="primary">E</name>
    <name type="synonym">sM</name>
    <name type="ORF">3c</name>
</gene>
<organismHost>
    <name type="scientific">Gallus gallus</name>
    <name type="common">Chicken</name>
    <dbReference type="NCBI Taxonomy" id="9031"/>
</organismHost>
<sequence>MMNLLNKSLEENGSVLTAFYIFVAFVALYLLGRALQAFVQAADACCLFWYTWVVVPGAKGTTFVYKHTYGKKLNKPELETVIVNEFPKNGWKQ</sequence>
<evidence type="ECO:0000255" key="1">
    <source>
        <dbReference type="HAMAP-Rule" id="MF_04206"/>
    </source>
</evidence>
<dbReference type="EMBL" id="X59819">
    <property type="protein sequence ID" value="CAA42489.1"/>
    <property type="molecule type" value="Genomic_RNA"/>
</dbReference>
<dbReference type="PIR" id="I41038">
    <property type="entry name" value="WMIHB9"/>
</dbReference>
<dbReference type="GO" id="GO:0044178">
    <property type="term" value="C:host cell Golgi membrane"/>
    <property type="evidence" value="ECO:0007669"/>
    <property type="project" value="UniProtKB-SubCell"/>
</dbReference>
<dbReference type="GO" id="GO:0016020">
    <property type="term" value="C:membrane"/>
    <property type="evidence" value="ECO:0007669"/>
    <property type="project" value="UniProtKB-UniRule"/>
</dbReference>
<dbReference type="GO" id="GO:0140975">
    <property type="term" value="P:disruption of cellular anatomical structure in another organism"/>
    <property type="evidence" value="ECO:0007669"/>
    <property type="project" value="UniProtKB-UniRule"/>
</dbReference>
<dbReference type="GO" id="GO:0046760">
    <property type="term" value="P:viral budding from Golgi membrane"/>
    <property type="evidence" value="ECO:0007669"/>
    <property type="project" value="UniProtKB-UniRule"/>
</dbReference>
<dbReference type="HAMAP" id="MF_04206">
    <property type="entry name" value="GAMMA_CORONA_E"/>
    <property type="match status" value="1"/>
</dbReference>
<dbReference type="InterPro" id="IPR003873">
    <property type="entry name" value="E_protein_CoV"/>
</dbReference>
<dbReference type="InterPro" id="IPR005296">
    <property type="entry name" value="IBV_3C"/>
</dbReference>
<dbReference type="Pfam" id="PF03620">
    <property type="entry name" value="IBV_3C"/>
    <property type="match status" value="1"/>
</dbReference>
<dbReference type="PROSITE" id="PS51926">
    <property type="entry name" value="COV_E"/>
    <property type="match status" value="1"/>
</dbReference>
<proteinExistence type="inferred from homology"/>
<feature type="chain" id="PRO_0000106081" description="Envelope small membrane protein">
    <location>
        <begin position="1"/>
        <end position="93"/>
    </location>
</feature>
<feature type="topological domain" description="Virion surface" evidence="1">
    <location>
        <begin position="1"/>
        <end position="11"/>
    </location>
</feature>
<feature type="transmembrane region" description="Helical" evidence="1">
    <location>
        <begin position="12"/>
        <end position="32"/>
    </location>
</feature>
<feature type="topological domain" description="Intravirion" evidence="1">
    <location>
        <begin position="33"/>
        <end position="93"/>
    </location>
</feature>
<keyword id="KW-0053">Apoptosis</keyword>
<keyword id="KW-1040">Host Golgi apparatus</keyword>
<keyword id="KW-1043">Host membrane</keyword>
<keyword id="KW-0472">Membrane</keyword>
<keyword id="KW-0812">Transmembrane</keyword>
<keyword id="KW-1133">Transmembrane helix</keyword>
<name>VEMP_IBVP3</name>